<reference key="1">
    <citation type="journal article" date="2005" name="PLoS Biol.">
        <title>The genomes of Oryza sativa: a history of duplications.</title>
        <authorList>
            <person name="Yu J."/>
            <person name="Wang J."/>
            <person name="Lin W."/>
            <person name="Li S."/>
            <person name="Li H."/>
            <person name="Zhou J."/>
            <person name="Ni P."/>
            <person name="Dong W."/>
            <person name="Hu S."/>
            <person name="Zeng C."/>
            <person name="Zhang J."/>
            <person name="Zhang Y."/>
            <person name="Li R."/>
            <person name="Xu Z."/>
            <person name="Li S."/>
            <person name="Li X."/>
            <person name="Zheng H."/>
            <person name="Cong L."/>
            <person name="Lin L."/>
            <person name="Yin J."/>
            <person name="Geng J."/>
            <person name="Li G."/>
            <person name="Shi J."/>
            <person name="Liu J."/>
            <person name="Lv H."/>
            <person name="Li J."/>
            <person name="Wang J."/>
            <person name="Deng Y."/>
            <person name="Ran L."/>
            <person name="Shi X."/>
            <person name="Wang X."/>
            <person name="Wu Q."/>
            <person name="Li C."/>
            <person name="Ren X."/>
            <person name="Wang J."/>
            <person name="Wang X."/>
            <person name="Li D."/>
            <person name="Liu D."/>
            <person name="Zhang X."/>
            <person name="Ji Z."/>
            <person name="Zhao W."/>
            <person name="Sun Y."/>
            <person name="Zhang Z."/>
            <person name="Bao J."/>
            <person name="Han Y."/>
            <person name="Dong L."/>
            <person name="Ji J."/>
            <person name="Chen P."/>
            <person name="Wu S."/>
            <person name="Liu J."/>
            <person name="Xiao Y."/>
            <person name="Bu D."/>
            <person name="Tan J."/>
            <person name="Yang L."/>
            <person name="Ye C."/>
            <person name="Zhang J."/>
            <person name="Xu J."/>
            <person name="Zhou Y."/>
            <person name="Yu Y."/>
            <person name="Zhang B."/>
            <person name="Zhuang S."/>
            <person name="Wei H."/>
            <person name="Liu B."/>
            <person name="Lei M."/>
            <person name="Yu H."/>
            <person name="Li Y."/>
            <person name="Xu H."/>
            <person name="Wei S."/>
            <person name="He X."/>
            <person name="Fang L."/>
            <person name="Zhang Z."/>
            <person name="Zhang Y."/>
            <person name="Huang X."/>
            <person name="Su Z."/>
            <person name="Tong W."/>
            <person name="Li J."/>
            <person name="Tong Z."/>
            <person name="Li S."/>
            <person name="Ye J."/>
            <person name="Wang L."/>
            <person name="Fang L."/>
            <person name="Lei T."/>
            <person name="Chen C.-S."/>
            <person name="Chen H.-C."/>
            <person name="Xu Z."/>
            <person name="Li H."/>
            <person name="Huang H."/>
            <person name="Zhang F."/>
            <person name="Xu H."/>
            <person name="Li N."/>
            <person name="Zhao C."/>
            <person name="Li S."/>
            <person name="Dong L."/>
            <person name="Huang Y."/>
            <person name="Li L."/>
            <person name="Xi Y."/>
            <person name="Qi Q."/>
            <person name="Li W."/>
            <person name="Zhang B."/>
            <person name="Hu W."/>
            <person name="Zhang Y."/>
            <person name="Tian X."/>
            <person name="Jiao Y."/>
            <person name="Liang X."/>
            <person name="Jin J."/>
            <person name="Gao L."/>
            <person name="Zheng W."/>
            <person name="Hao B."/>
            <person name="Liu S.-M."/>
            <person name="Wang W."/>
            <person name="Yuan L."/>
            <person name="Cao M."/>
            <person name="McDermott J."/>
            <person name="Samudrala R."/>
            <person name="Wang J."/>
            <person name="Wong G.K.-S."/>
            <person name="Yang H."/>
        </authorList>
    </citation>
    <scope>NUCLEOTIDE SEQUENCE [LARGE SCALE GENOMIC DNA]</scope>
    <source>
        <strain>cv. 93-11</strain>
    </source>
</reference>
<organism>
    <name type="scientific">Oryza sativa subsp. indica</name>
    <name type="common">Rice</name>
    <dbReference type="NCBI Taxonomy" id="39946"/>
    <lineage>
        <taxon>Eukaryota</taxon>
        <taxon>Viridiplantae</taxon>
        <taxon>Streptophyta</taxon>
        <taxon>Embryophyta</taxon>
        <taxon>Tracheophyta</taxon>
        <taxon>Spermatophyta</taxon>
        <taxon>Magnoliopsida</taxon>
        <taxon>Liliopsida</taxon>
        <taxon>Poales</taxon>
        <taxon>Poaceae</taxon>
        <taxon>BOP clade</taxon>
        <taxon>Oryzoideae</taxon>
        <taxon>Oryzeae</taxon>
        <taxon>Oryzinae</taxon>
        <taxon>Oryza</taxon>
        <taxon>Oryza sativa</taxon>
    </lineage>
</organism>
<evidence type="ECO:0000250" key="1"/>
<evidence type="ECO:0000255" key="2"/>
<evidence type="ECO:0000305" key="3"/>
<sequence>MAPNAAVLVRPHIAGVHHLPTGRRLPRLAPPQAVSPPFSRQKGSVVAASGRVWASASGSFEKDRIGDDDVLASPQIVEESKVDLLKILKSANTIIPHVVLGSTILALVYPPSFTWFTTRYYAPALGFLMFAVGVNSSVKDFIEAIQRPDAIAAGYVGQFIIKPFLGFLFGTLAVTIFNLPTALGAGIMLVSCVSGAQLSNYATFLTDPHMAPLSIVMTSLSTATAVFVTPTLSYFLIGKKLPVDVKGMMSSIVQIVVAPIAAGLLLNRYLPRLCSAIQPFLPPLSVFVTALCVGSPLAINIKAVLSPFGLATVLLLFAFHTSSFIAGYHLAGTWFRESADVKALQRTVSFETGMQSSLLALALANRFFPDPLVGVPPAISVVLMSLMGFALVMVWSKRTKE</sequence>
<accession>B8BDK4</accession>
<protein>
    <recommendedName>
        <fullName>Probable sodium/metabolite cotransporter BASS5, chloroplastic</fullName>
    </recommendedName>
    <alternativeName>
        <fullName>Bile acid-sodium symporter family protein 5</fullName>
    </alternativeName>
</protein>
<comment type="function">
    <text evidence="1">May function as sodium-coupled metabolite transporter across the chloroplast envelope.</text>
</comment>
<comment type="subcellular location">
    <subcellularLocation>
        <location evidence="3">Membrane</location>
        <topology evidence="3">Multi-pass membrane protein</topology>
    </subcellularLocation>
    <subcellularLocation>
        <location evidence="3">Plastid</location>
        <location evidence="3">Chloroplast envelope</location>
    </subcellularLocation>
</comment>
<comment type="similarity">
    <text evidence="3">Belongs to the bile acid:sodium symporter (BASS) (TC 2.A.28) family.</text>
</comment>
<dbReference type="EMBL" id="CM000134">
    <property type="protein sequence ID" value="EEC84897.1"/>
    <property type="molecule type" value="Genomic_DNA"/>
</dbReference>
<dbReference type="SMR" id="B8BDK4"/>
<dbReference type="STRING" id="39946.B8BDK4"/>
<dbReference type="EnsemblPlants" id="BGIOSGA029422-TA">
    <property type="protein sequence ID" value="BGIOSGA029422-PA"/>
    <property type="gene ID" value="BGIOSGA029422"/>
</dbReference>
<dbReference type="EnsemblPlants" id="OsIR64_09g0016950.01">
    <property type="protein sequence ID" value="OsIR64_09g0016950.01"/>
    <property type="gene ID" value="OsIR64_09g0016950"/>
</dbReference>
<dbReference type="EnsemblPlants" id="OsKYG_09g0016760.01">
    <property type="protein sequence ID" value="OsKYG_09g0016760.01"/>
    <property type="gene ID" value="OsKYG_09g0016760"/>
</dbReference>
<dbReference type="EnsemblPlants" id="OsLaMu_09g0016820.01">
    <property type="protein sequence ID" value="OsLaMu_09g0016820.01"/>
    <property type="gene ID" value="OsLaMu_09g0016820"/>
</dbReference>
<dbReference type="EnsemblPlants" id="OsLiXu_09g0016720.01">
    <property type="protein sequence ID" value="OsLiXu_09g0016720.01"/>
    <property type="gene ID" value="OsLiXu_09g0016720"/>
</dbReference>
<dbReference type="EnsemblPlants" id="OsMH63_09G017330_01">
    <property type="protein sequence ID" value="OsMH63_09G017330_01"/>
    <property type="gene ID" value="OsMH63_09G017330"/>
</dbReference>
<dbReference type="EnsemblPlants" id="OsPr106_09g0017100.01">
    <property type="protein sequence ID" value="OsPr106_09g0017100.01"/>
    <property type="gene ID" value="OsPr106_09g0017100"/>
</dbReference>
<dbReference type="EnsemblPlants" id="OsZS97_09G016980_01">
    <property type="protein sequence ID" value="OsZS97_09G016980_01"/>
    <property type="gene ID" value="OsZS97_09G016980"/>
</dbReference>
<dbReference type="Gramene" id="BGIOSGA029422-TA">
    <property type="protein sequence ID" value="BGIOSGA029422-PA"/>
    <property type="gene ID" value="BGIOSGA029422"/>
</dbReference>
<dbReference type="Gramene" id="OsIR64_09g0016950.01">
    <property type="protein sequence ID" value="OsIR64_09g0016950.01"/>
    <property type="gene ID" value="OsIR64_09g0016950"/>
</dbReference>
<dbReference type="Gramene" id="OsKYG_09g0016760.01">
    <property type="protein sequence ID" value="OsKYG_09g0016760.01"/>
    <property type="gene ID" value="OsKYG_09g0016760"/>
</dbReference>
<dbReference type="Gramene" id="OsLaMu_09g0016820.01">
    <property type="protein sequence ID" value="OsLaMu_09g0016820.01"/>
    <property type="gene ID" value="OsLaMu_09g0016820"/>
</dbReference>
<dbReference type="Gramene" id="OsLiXu_09g0016720.01">
    <property type="protein sequence ID" value="OsLiXu_09g0016720.01"/>
    <property type="gene ID" value="OsLiXu_09g0016720"/>
</dbReference>
<dbReference type="Gramene" id="OsMH63_09G017330_01">
    <property type="protein sequence ID" value="OsMH63_09G017330_01"/>
    <property type="gene ID" value="OsMH63_09G017330"/>
</dbReference>
<dbReference type="Gramene" id="OsPr106_09g0017100.01">
    <property type="protein sequence ID" value="OsPr106_09g0017100.01"/>
    <property type="gene ID" value="OsPr106_09g0017100"/>
</dbReference>
<dbReference type="Gramene" id="OsZS97_09G016980_01">
    <property type="protein sequence ID" value="OsZS97_09G016980_01"/>
    <property type="gene ID" value="OsZS97_09G016980"/>
</dbReference>
<dbReference type="HOGENOM" id="CLU_034788_3_1_1"/>
<dbReference type="OMA" id="PLAMNIN"/>
<dbReference type="Proteomes" id="UP000007015">
    <property type="component" value="Chromosome 9"/>
</dbReference>
<dbReference type="GO" id="GO:0009941">
    <property type="term" value="C:chloroplast envelope"/>
    <property type="evidence" value="ECO:0007669"/>
    <property type="project" value="UniProtKB-SubCell"/>
</dbReference>
<dbReference type="GO" id="GO:0016020">
    <property type="term" value="C:membrane"/>
    <property type="evidence" value="ECO:0007669"/>
    <property type="project" value="UniProtKB-SubCell"/>
</dbReference>
<dbReference type="Gene3D" id="1.20.1530.20">
    <property type="match status" value="1"/>
</dbReference>
<dbReference type="InterPro" id="IPR002657">
    <property type="entry name" value="BilAc:Na_symport/Acr3"/>
</dbReference>
<dbReference type="InterPro" id="IPR004710">
    <property type="entry name" value="Bilac:Na_transpt"/>
</dbReference>
<dbReference type="InterPro" id="IPR038770">
    <property type="entry name" value="Na+/solute_symporter_sf"/>
</dbReference>
<dbReference type="PANTHER" id="PTHR10361">
    <property type="entry name" value="SODIUM-BILE ACID COTRANSPORTER"/>
    <property type="match status" value="1"/>
</dbReference>
<dbReference type="PANTHER" id="PTHR10361:SF30">
    <property type="entry name" value="SODIUM_METABOLITE COTRANSPORTER BASS6, CHLOROPLASTIC-RELATED"/>
    <property type="match status" value="1"/>
</dbReference>
<dbReference type="Pfam" id="PF01758">
    <property type="entry name" value="SBF"/>
    <property type="match status" value="1"/>
</dbReference>
<proteinExistence type="inferred from homology"/>
<keyword id="KW-0150">Chloroplast</keyword>
<keyword id="KW-0472">Membrane</keyword>
<keyword id="KW-0934">Plastid</keyword>
<keyword id="KW-1185">Reference proteome</keyword>
<keyword id="KW-0809">Transit peptide</keyword>
<keyword id="KW-0812">Transmembrane</keyword>
<keyword id="KW-1133">Transmembrane helix</keyword>
<keyword id="KW-0813">Transport</keyword>
<gene>
    <name type="primary">BASS5</name>
    <name type="ORF">OsI_32074</name>
</gene>
<feature type="transit peptide" description="Chloroplast" evidence="2">
    <location>
        <begin position="1"/>
        <end position="46"/>
    </location>
</feature>
<feature type="chain" id="PRO_0000418614" description="Probable sodium/metabolite cotransporter BASS5, chloroplastic">
    <location>
        <begin position="47"/>
        <end position="401"/>
    </location>
</feature>
<feature type="transmembrane region" description="Helical" evidence="2">
    <location>
        <begin position="93"/>
        <end position="113"/>
    </location>
</feature>
<feature type="transmembrane region" description="Helical" evidence="2">
    <location>
        <begin position="122"/>
        <end position="142"/>
    </location>
</feature>
<feature type="transmembrane region" description="Helical" evidence="2">
    <location>
        <begin position="159"/>
        <end position="179"/>
    </location>
</feature>
<feature type="transmembrane region" description="Helical" evidence="2">
    <location>
        <begin position="185"/>
        <end position="205"/>
    </location>
</feature>
<feature type="transmembrane region" description="Helical" evidence="2">
    <location>
        <begin position="215"/>
        <end position="235"/>
    </location>
</feature>
<feature type="transmembrane region" description="Helical" evidence="2">
    <location>
        <begin position="247"/>
        <end position="267"/>
    </location>
</feature>
<feature type="transmembrane region" description="Helical" evidence="2">
    <location>
        <begin position="273"/>
        <end position="293"/>
    </location>
</feature>
<feature type="transmembrane region" description="Helical" evidence="2">
    <location>
        <begin position="299"/>
        <end position="319"/>
    </location>
</feature>
<feature type="transmembrane region" description="Helical" evidence="2">
    <location>
        <begin position="372"/>
        <end position="392"/>
    </location>
</feature>
<name>BASS5_ORYSI</name>